<evidence type="ECO:0000250" key="1">
    <source>
        <dbReference type="UniProtKB" id="Q9VVD9"/>
    </source>
</evidence>
<evidence type="ECO:0000255" key="2"/>
<evidence type="ECO:0000256" key="3">
    <source>
        <dbReference type="SAM" id="MobiDB-lite"/>
    </source>
</evidence>
<dbReference type="EMBL" id="CH379070">
    <property type="protein sequence ID" value="EAL29927.2"/>
    <property type="molecule type" value="Genomic_DNA"/>
</dbReference>
<dbReference type="RefSeq" id="XP_001352431.2">
    <property type="nucleotide sequence ID" value="XM_001352395.3"/>
</dbReference>
<dbReference type="RefSeq" id="XP_015043560.1">
    <property type="nucleotide sequence ID" value="XM_015188074.1"/>
</dbReference>
<dbReference type="SMR" id="Q29EY2"/>
<dbReference type="FunCoup" id="Q29EY2">
    <property type="interactions" value="1210"/>
</dbReference>
<dbReference type="STRING" id="46245.Q29EY2"/>
<dbReference type="EnsemblMetazoa" id="FBtr0288112">
    <property type="protein sequence ID" value="FBpp0286550"/>
    <property type="gene ID" value="FBgn0080629"/>
</dbReference>
<dbReference type="EnsemblMetazoa" id="FBtr0365693">
    <property type="protein sequence ID" value="FBpp0328990"/>
    <property type="gene ID" value="FBgn0080629"/>
</dbReference>
<dbReference type="GeneID" id="4811890"/>
<dbReference type="KEGG" id="dpo:4811890"/>
<dbReference type="CTD" id="39914"/>
<dbReference type="eggNOG" id="KOG1582">
    <property type="taxonomic scope" value="Eukaryota"/>
</dbReference>
<dbReference type="HOGENOM" id="CLU_036019_2_0_1"/>
<dbReference type="InParanoid" id="Q29EY2"/>
<dbReference type="OMA" id="YNRTTQF"/>
<dbReference type="Proteomes" id="UP000001819">
    <property type="component" value="Chromosome X"/>
</dbReference>
<dbReference type="Bgee" id="FBgn0080629">
    <property type="expression patterns" value="Expressed in male reproductive system and 2 other cell types or tissues"/>
</dbReference>
<dbReference type="GO" id="GO:0005789">
    <property type="term" value="C:endoplasmic reticulum membrane"/>
    <property type="evidence" value="ECO:0007669"/>
    <property type="project" value="TreeGrafter"/>
</dbReference>
<dbReference type="GO" id="GO:0005794">
    <property type="term" value="C:Golgi apparatus"/>
    <property type="evidence" value="ECO:0000250"/>
    <property type="project" value="UniProtKB"/>
</dbReference>
<dbReference type="GO" id="GO:0000139">
    <property type="term" value="C:Golgi membrane"/>
    <property type="evidence" value="ECO:0007669"/>
    <property type="project" value="UniProtKB-SubCell"/>
</dbReference>
<dbReference type="GO" id="GO:0046964">
    <property type="term" value="F:3'-phosphoadenosine 5'-phosphosulfate transmembrane transporter activity"/>
    <property type="evidence" value="ECO:0000250"/>
    <property type="project" value="UniProtKB"/>
</dbReference>
<dbReference type="GO" id="GO:0046963">
    <property type="term" value="P:3'-phosphoadenosine 5'-phosphosulfate transport"/>
    <property type="evidence" value="ECO:0000250"/>
    <property type="project" value="UniProtKB"/>
</dbReference>
<dbReference type="InterPro" id="IPR013657">
    <property type="entry name" value="SCL35B1-4/HUT1"/>
</dbReference>
<dbReference type="PANTHER" id="PTHR10778:SF8">
    <property type="entry name" value="ADENOSINE 3'-PHOSPHO 5'-PHOSPHOSULFATE TRANSPORTER 2"/>
    <property type="match status" value="1"/>
</dbReference>
<dbReference type="PANTHER" id="PTHR10778">
    <property type="entry name" value="SOLUTE CARRIER FAMILY 35 MEMBER B"/>
    <property type="match status" value="1"/>
</dbReference>
<dbReference type="Pfam" id="PF08449">
    <property type="entry name" value="UAA"/>
    <property type="match status" value="1"/>
</dbReference>
<keyword id="KW-0217">Developmental protein</keyword>
<keyword id="KW-0333">Golgi apparatus</keyword>
<keyword id="KW-0472">Membrane</keyword>
<keyword id="KW-1185">Reference proteome</keyword>
<keyword id="KW-0812">Transmembrane</keyword>
<keyword id="KW-1133">Transmembrane helix</keyword>
<keyword id="KW-0813">Transport</keyword>
<name>S35B3_DROPS</name>
<gene>
    <name evidence="1" type="primary">Papst2</name>
    <name type="ORF">GA20635</name>
</gene>
<sequence length="392" mass="43235">MGDGQAGSVININGSASGQQAPTSNSPTLTRKSSSSELPPELRILCFDLTHYNQTTQFLLSCAGVFILYILYGYLQELIFTVEGFKPFGWFLTLVQFGYYIGFGLVERRLEAYRSGRRSLWNVEPAPRCIPMKTYLVLAALTLGTMGLSNSSLGYLNYPTQVIFKCCKLIPVLVGSILIQGKRYGPLDFAAASCMCIGLAWFTLADSQMTPNFNLLGVAMISGALLCDAAIGNVQEKAMKEHKAPSSEVVFYSYGLGFVYLFVIMLVTGNFFSGFAFCLEHPLQTFGYGFLFSLSGYLGIQFVLALVRSSGAPIAATVTTARKAVTIAFSFVLFSKPFTVQYLWSGLIVVLGIYLNVYSKKNKLTFADIRSRFKQFGFRLARSPSRKFLVEV</sequence>
<comment type="function">
    <text evidence="1">Mediates the transport of adenosine 3'-phospho 5'-phosphosulfate (PAPS), from cytosol into Golgi. PAPS is a universal sulfuryl donor for sulfation events that take place in the Golgi. Essential for viability. Involved in glycosaminoglycan synthesis and the subsequent signaling. May be involved in hh and dpp signaling by controlling the sulfation of heparan sulfate (HS) (By similarity).</text>
</comment>
<comment type="subcellular location">
    <subcellularLocation>
        <location evidence="1">Golgi apparatus membrane</location>
        <topology evidence="1">Multi-pass membrane protein</topology>
    </subcellularLocation>
</comment>
<comment type="similarity">
    <text evidence="2">Belongs to the nucleotide-sugar transporter family. SLC35B subfamily.</text>
</comment>
<accession>Q29EY2</accession>
<feature type="chain" id="PRO_0000307352" description="Adenosine 3'-phospho 5'-phosphosulfate transporter 2">
    <location>
        <begin position="1"/>
        <end position="392"/>
    </location>
</feature>
<feature type="transmembrane region" description="Helical" evidence="2">
    <location>
        <begin position="62"/>
        <end position="82"/>
    </location>
</feature>
<feature type="transmembrane region" description="Helical" evidence="2">
    <location>
        <begin position="87"/>
        <end position="107"/>
    </location>
</feature>
<feature type="transmembrane region" description="Helical" evidence="2">
    <location>
        <begin position="136"/>
        <end position="156"/>
    </location>
</feature>
<feature type="transmembrane region" description="Helical" evidence="2">
    <location>
        <begin position="159"/>
        <end position="179"/>
    </location>
</feature>
<feature type="transmembrane region" description="Helical" evidence="2">
    <location>
        <begin position="185"/>
        <end position="205"/>
    </location>
</feature>
<feature type="transmembrane region" description="Helical" evidence="2">
    <location>
        <begin position="212"/>
        <end position="232"/>
    </location>
</feature>
<feature type="transmembrane region" description="Helical" evidence="2">
    <location>
        <begin position="249"/>
        <end position="269"/>
    </location>
</feature>
<feature type="transmembrane region" description="Helical" evidence="2">
    <location>
        <begin position="286"/>
        <end position="306"/>
    </location>
</feature>
<feature type="transmembrane region" description="Helical" evidence="2">
    <location>
        <begin position="314"/>
        <end position="334"/>
    </location>
</feature>
<feature type="transmembrane region" description="Helical" evidence="2">
    <location>
        <begin position="338"/>
        <end position="358"/>
    </location>
</feature>
<feature type="region of interest" description="Disordered" evidence="3">
    <location>
        <begin position="11"/>
        <end position="35"/>
    </location>
</feature>
<protein>
    <recommendedName>
        <fullName>Adenosine 3'-phospho 5'-phosphosulfate transporter 2</fullName>
    </recommendedName>
    <alternativeName>
        <fullName>PAPS transporter 2</fullName>
    </alternativeName>
    <alternativeName>
        <fullName>Solute carrier family 35 member B3 homolog</fullName>
    </alternativeName>
</protein>
<organism>
    <name type="scientific">Drosophila pseudoobscura pseudoobscura</name>
    <name type="common">Fruit fly</name>
    <dbReference type="NCBI Taxonomy" id="46245"/>
    <lineage>
        <taxon>Eukaryota</taxon>
        <taxon>Metazoa</taxon>
        <taxon>Ecdysozoa</taxon>
        <taxon>Arthropoda</taxon>
        <taxon>Hexapoda</taxon>
        <taxon>Insecta</taxon>
        <taxon>Pterygota</taxon>
        <taxon>Neoptera</taxon>
        <taxon>Endopterygota</taxon>
        <taxon>Diptera</taxon>
        <taxon>Brachycera</taxon>
        <taxon>Muscomorpha</taxon>
        <taxon>Ephydroidea</taxon>
        <taxon>Drosophilidae</taxon>
        <taxon>Drosophila</taxon>
        <taxon>Sophophora</taxon>
    </lineage>
</organism>
<reference key="1">
    <citation type="journal article" date="2005" name="Genome Res.">
        <title>Comparative genome sequencing of Drosophila pseudoobscura: chromosomal, gene, and cis-element evolution.</title>
        <authorList>
            <person name="Richards S."/>
            <person name="Liu Y."/>
            <person name="Bettencourt B.R."/>
            <person name="Hradecky P."/>
            <person name="Letovsky S."/>
            <person name="Nielsen R."/>
            <person name="Thornton K."/>
            <person name="Hubisz M.J."/>
            <person name="Chen R."/>
            <person name="Meisel R.P."/>
            <person name="Couronne O."/>
            <person name="Hua S."/>
            <person name="Smith M.A."/>
            <person name="Zhang P."/>
            <person name="Liu J."/>
            <person name="Bussemaker H.J."/>
            <person name="van Batenburg M.F."/>
            <person name="Howells S.L."/>
            <person name="Scherer S.E."/>
            <person name="Sodergren E."/>
            <person name="Matthews B.B."/>
            <person name="Crosby M.A."/>
            <person name="Schroeder A.J."/>
            <person name="Ortiz-Barrientos D."/>
            <person name="Rives C.M."/>
            <person name="Metzker M.L."/>
            <person name="Muzny D.M."/>
            <person name="Scott G."/>
            <person name="Steffen D."/>
            <person name="Wheeler D.A."/>
            <person name="Worley K.C."/>
            <person name="Havlak P."/>
            <person name="Durbin K.J."/>
            <person name="Egan A."/>
            <person name="Gill R."/>
            <person name="Hume J."/>
            <person name="Morgan M.B."/>
            <person name="Miner G."/>
            <person name="Hamilton C."/>
            <person name="Huang Y."/>
            <person name="Waldron L."/>
            <person name="Verduzco D."/>
            <person name="Clerc-Blankenburg K.P."/>
            <person name="Dubchak I."/>
            <person name="Noor M.A.F."/>
            <person name="Anderson W."/>
            <person name="White K.P."/>
            <person name="Clark A.G."/>
            <person name="Schaeffer S.W."/>
            <person name="Gelbart W.M."/>
            <person name="Weinstock G.M."/>
            <person name="Gibbs R.A."/>
        </authorList>
    </citation>
    <scope>NUCLEOTIDE SEQUENCE [LARGE SCALE GENOMIC DNA]</scope>
    <source>
        <strain>MV2-25 / Tucson 14011-0121.94</strain>
    </source>
</reference>
<proteinExistence type="inferred from homology"/>